<accession>B2V9R3</accession>
<comment type="function">
    <text evidence="1">Catalyzes the oxidation of 5,10-methylenetetrahydrofolate to 5,10-methenyltetrahydrofolate and then the hydrolysis of 5,10-methenyltetrahydrofolate to 10-formyltetrahydrofolate.</text>
</comment>
<comment type="catalytic activity">
    <reaction evidence="1">
        <text>(6R)-5,10-methylene-5,6,7,8-tetrahydrofolate + NADP(+) = (6R)-5,10-methenyltetrahydrofolate + NADPH</text>
        <dbReference type="Rhea" id="RHEA:22812"/>
        <dbReference type="ChEBI" id="CHEBI:15636"/>
        <dbReference type="ChEBI" id="CHEBI:57455"/>
        <dbReference type="ChEBI" id="CHEBI:57783"/>
        <dbReference type="ChEBI" id="CHEBI:58349"/>
        <dbReference type="EC" id="1.5.1.5"/>
    </reaction>
</comment>
<comment type="catalytic activity">
    <reaction evidence="1">
        <text>(6R)-5,10-methenyltetrahydrofolate + H2O = (6R)-10-formyltetrahydrofolate + H(+)</text>
        <dbReference type="Rhea" id="RHEA:23700"/>
        <dbReference type="ChEBI" id="CHEBI:15377"/>
        <dbReference type="ChEBI" id="CHEBI:15378"/>
        <dbReference type="ChEBI" id="CHEBI:57455"/>
        <dbReference type="ChEBI" id="CHEBI:195366"/>
        <dbReference type="EC" id="3.5.4.9"/>
    </reaction>
</comment>
<comment type="pathway">
    <text evidence="1">One-carbon metabolism; tetrahydrofolate interconversion.</text>
</comment>
<comment type="subunit">
    <text evidence="1">Homodimer.</text>
</comment>
<comment type="similarity">
    <text evidence="1">Belongs to the tetrahydrofolate dehydrogenase/cyclohydrolase family.</text>
</comment>
<proteinExistence type="inferred from homology"/>
<gene>
    <name evidence="1" type="primary">folD</name>
    <name type="ordered locus">SYO3AOP1_1067</name>
</gene>
<organism>
    <name type="scientific">Sulfurihydrogenibium sp. (strain YO3AOP1)</name>
    <dbReference type="NCBI Taxonomy" id="436114"/>
    <lineage>
        <taxon>Bacteria</taxon>
        <taxon>Pseudomonadati</taxon>
        <taxon>Aquificota</taxon>
        <taxon>Aquificia</taxon>
        <taxon>Aquificales</taxon>
        <taxon>Hydrogenothermaceae</taxon>
        <taxon>Sulfurihydrogenibium</taxon>
    </lineage>
</organism>
<sequence length="285" mass="31301">MILLDGKSLAEKIKNQIKQEIDQLTQKGYRQPVLSVILVGENPASQIYVNKKIKDCASVGIKSKPFFLPENITQTELLELIGDLNGDEEVDGILVQLPLPSHINTLEIIEAINPYKDVDGFHPINVGKLATGRNDAILPCTPYGIMKLLHEYNIDHFGKDVVVVGASNIVGKPMSLLFLKDEKSTVTICHKNTKDLKSHTLKADILVVAVGKPKLITEDMVKEGAVVIDVGINRVDGKIVGDVDFENVKKKAYAITPVPGGVGPMTVAMLLYNTLEIYKRKLIEI</sequence>
<dbReference type="EC" id="1.5.1.5" evidence="1"/>
<dbReference type="EC" id="3.5.4.9" evidence="1"/>
<dbReference type="EMBL" id="CP001080">
    <property type="protein sequence ID" value="ACD66686.1"/>
    <property type="molecule type" value="Genomic_DNA"/>
</dbReference>
<dbReference type="RefSeq" id="WP_012459754.1">
    <property type="nucleotide sequence ID" value="NC_010730.1"/>
</dbReference>
<dbReference type="SMR" id="B2V9R3"/>
<dbReference type="STRING" id="436114.SYO3AOP1_1067"/>
<dbReference type="KEGG" id="sul:SYO3AOP1_1067"/>
<dbReference type="eggNOG" id="COG0190">
    <property type="taxonomic scope" value="Bacteria"/>
</dbReference>
<dbReference type="HOGENOM" id="CLU_034045_2_1_0"/>
<dbReference type="UniPathway" id="UPA00193"/>
<dbReference type="GO" id="GO:0005829">
    <property type="term" value="C:cytosol"/>
    <property type="evidence" value="ECO:0007669"/>
    <property type="project" value="TreeGrafter"/>
</dbReference>
<dbReference type="GO" id="GO:0004477">
    <property type="term" value="F:methenyltetrahydrofolate cyclohydrolase activity"/>
    <property type="evidence" value="ECO:0007669"/>
    <property type="project" value="UniProtKB-UniRule"/>
</dbReference>
<dbReference type="GO" id="GO:0004488">
    <property type="term" value="F:methylenetetrahydrofolate dehydrogenase (NADP+) activity"/>
    <property type="evidence" value="ECO:0007669"/>
    <property type="project" value="UniProtKB-UniRule"/>
</dbReference>
<dbReference type="GO" id="GO:0000105">
    <property type="term" value="P:L-histidine biosynthetic process"/>
    <property type="evidence" value="ECO:0007669"/>
    <property type="project" value="UniProtKB-KW"/>
</dbReference>
<dbReference type="GO" id="GO:0009086">
    <property type="term" value="P:methionine biosynthetic process"/>
    <property type="evidence" value="ECO:0007669"/>
    <property type="project" value="UniProtKB-KW"/>
</dbReference>
<dbReference type="GO" id="GO:0006164">
    <property type="term" value="P:purine nucleotide biosynthetic process"/>
    <property type="evidence" value="ECO:0007669"/>
    <property type="project" value="UniProtKB-KW"/>
</dbReference>
<dbReference type="GO" id="GO:0035999">
    <property type="term" value="P:tetrahydrofolate interconversion"/>
    <property type="evidence" value="ECO:0007669"/>
    <property type="project" value="UniProtKB-UniRule"/>
</dbReference>
<dbReference type="CDD" id="cd01080">
    <property type="entry name" value="NAD_bind_m-THF_DH_Cyclohyd"/>
    <property type="match status" value="1"/>
</dbReference>
<dbReference type="FunFam" id="3.40.50.10860:FF:000001">
    <property type="entry name" value="Bifunctional protein FolD"/>
    <property type="match status" value="1"/>
</dbReference>
<dbReference type="FunFam" id="3.40.50.720:FF:000094">
    <property type="entry name" value="Bifunctional protein FolD"/>
    <property type="match status" value="1"/>
</dbReference>
<dbReference type="Gene3D" id="3.40.50.10860">
    <property type="entry name" value="Leucine Dehydrogenase, chain A, domain 1"/>
    <property type="match status" value="1"/>
</dbReference>
<dbReference type="Gene3D" id="3.40.50.720">
    <property type="entry name" value="NAD(P)-binding Rossmann-like Domain"/>
    <property type="match status" value="1"/>
</dbReference>
<dbReference type="HAMAP" id="MF_01576">
    <property type="entry name" value="THF_DHG_CYH"/>
    <property type="match status" value="1"/>
</dbReference>
<dbReference type="InterPro" id="IPR046346">
    <property type="entry name" value="Aminoacid_DH-like_N_sf"/>
</dbReference>
<dbReference type="InterPro" id="IPR036291">
    <property type="entry name" value="NAD(P)-bd_dom_sf"/>
</dbReference>
<dbReference type="InterPro" id="IPR000672">
    <property type="entry name" value="THF_DH/CycHdrlase"/>
</dbReference>
<dbReference type="InterPro" id="IPR020630">
    <property type="entry name" value="THF_DH/CycHdrlase_cat_dom"/>
</dbReference>
<dbReference type="InterPro" id="IPR020867">
    <property type="entry name" value="THF_DH/CycHdrlase_CS"/>
</dbReference>
<dbReference type="InterPro" id="IPR020631">
    <property type="entry name" value="THF_DH/CycHdrlase_NAD-bd_dom"/>
</dbReference>
<dbReference type="NCBIfam" id="NF008058">
    <property type="entry name" value="PRK10792.1"/>
    <property type="match status" value="1"/>
</dbReference>
<dbReference type="NCBIfam" id="NF010783">
    <property type="entry name" value="PRK14186.1"/>
    <property type="match status" value="1"/>
</dbReference>
<dbReference type="PANTHER" id="PTHR48099:SF5">
    <property type="entry name" value="C-1-TETRAHYDROFOLATE SYNTHASE, CYTOPLASMIC"/>
    <property type="match status" value="1"/>
</dbReference>
<dbReference type="PANTHER" id="PTHR48099">
    <property type="entry name" value="C-1-TETRAHYDROFOLATE SYNTHASE, CYTOPLASMIC-RELATED"/>
    <property type="match status" value="1"/>
</dbReference>
<dbReference type="Pfam" id="PF00763">
    <property type="entry name" value="THF_DHG_CYH"/>
    <property type="match status" value="1"/>
</dbReference>
<dbReference type="Pfam" id="PF02882">
    <property type="entry name" value="THF_DHG_CYH_C"/>
    <property type="match status" value="1"/>
</dbReference>
<dbReference type="PRINTS" id="PR00085">
    <property type="entry name" value="THFDHDRGNASE"/>
</dbReference>
<dbReference type="SUPFAM" id="SSF53223">
    <property type="entry name" value="Aminoacid dehydrogenase-like, N-terminal domain"/>
    <property type="match status" value="1"/>
</dbReference>
<dbReference type="SUPFAM" id="SSF51735">
    <property type="entry name" value="NAD(P)-binding Rossmann-fold domains"/>
    <property type="match status" value="1"/>
</dbReference>
<dbReference type="PROSITE" id="PS00766">
    <property type="entry name" value="THF_DHG_CYH_1"/>
    <property type="match status" value="1"/>
</dbReference>
<dbReference type="PROSITE" id="PS00767">
    <property type="entry name" value="THF_DHG_CYH_2"/>
    <property type="match status" value="1"/>
</dbReference>
<evidence type="ECO:0000255" key="1">
    <source>
        <dbReference type="HAMAP-Rule" id="MF_01576"/>
    </source>
</evidence>
<keyword id="KW-0028">Amino-acid biosynthesis</keyword>
<keyword id="KW-0368">Histidine biosynthesis</keyword>
<keyword id="KW-0378">Hydrolase</keyword>
<keyword id="KW-0486">Methionine biosynthesis</keyword>
<keyword id="KW-0511">Multifunctional enzyme</keyword>
<keyword id="KW-0521">NADP</keyword>
<keyword id="KW-0554">One-carbon metabolism</keyword>
<keyword id="KW-0560">Oxidoreductase</keyword>
<keyword id="KW-0658">Purine biosynthesis</keyword>
<feature type="chain" id="PRO_1000196809" description="Bifunctional protein FolD">
    <location>
        <begin position="1"/>
        <end position="285"/>
    </location>
</feature>
<feature type="binding site" evidence="1">
    <location>
        <begin position="165"/>
        <end position="167"/>
    </location>
    <ligand>
        <name>NADP(+)</name>
        <dbReference type="ChEBI" id="CHEBI:58349"/>
    </ligand>
</feature>
<feature type="binding site" evidence="1">
    <location>
        <position position="232"/>
    </location>
    <ligand>
        <name>NADP(+)</name>
        <dbReference type="ChEBI" id="CHEBI:58349"/>
    </ligand>
</feature>
<name>FOLD_SULSY</name>
<reference key="1">
    <citation type="journal article" date="2009" name="J. Bacteriol.">
        <title>Complete and draft genome sequences of six members of the Aquificales.</title>
        <authorList>
            <person name="Reysenbach A.-L."/>
            <person name="Hamamura N."/>
            <person name="Podar M."/>
            <person name="Griffiths E."/>
            <person name="Ferreira S."/>
            <person name="Hochstein R."/>
            <person name="Heidelberg J."/>
            <person name="Johnson J."/>
            <person name="Mead D."/>
            <person name="Pohorille A."/>
            <person name="Sarmiento M."/>
            <person name="Schweighofer K."/>
            <person name="Seshadri R."/>
            <person name="Voytek M.A."/>
        </authorList>
    </citation>
    <scope>NUCLEOTIDE SEQUENCE [LARGE SCALE GENOMIC DNA]</scope>
    <source>
        <strain>YO3AOP1</strain>
    </source>
</reference>
<protein>
    <recommendedName>
        <fullName evidence="1">Bifunctional protein FolD</fullName>
    </recommendedName>
    <domain>
        <recommendedName>
            <fullName evidence="1">Methylenetetrahydrofolate dehydrogenase</fullName>
            <ecNumber evidence="1">1.5.1.5</ecNumber>
        </recommendedName>
    </domain>
    <domain>
        <recommendedName>
            <fullName evidence="1">Methenyltetrahydrofolate cyclohydrolase</fullName>
            <ecNumber evidence="1">3.5.4.9</ecNumber>
        </recommendedName>
    </domain>
</protein>